<dbReference type="PIR" id="A30036">
    <property type="entry name" value="FEDQ"/>
</dbReference>
<dbReference type="SMR" id="P10770"/>
<dbReference type="GO" id="GO:0009507">
    <property type="term" value="C:chloroplast"/>
    <property type="evidence" value="ECO:0007669"/>
    <property type="project" value="UniProtKB-SubCell"/>
</dbReference>
<dbReference type="GO" id="GO:0051537">
    <property type="term" value="F:2 iron, 2 sulfur cluster binding"/>
    <property type="evidence" value="ECO:0007669"/>
    <property type="project" value="UniProtKB-KW"/>
</dbReference>
<dbReference type="GO" id="GO:0009055">
    <property type="term" value="F:electron transfer activity"/>
    <property type="evidence" value="ECO:0007669"/>
    <property type="project" value="InterPro"/>
</dbReference>
<dbReference type="GO" id="GO:0046872">
    <property type="term" value="F:metal ion binding"/>
    <property type="evidence" value="ECO:0007669"/>
    <property type="project" value="UniProtKB-KW"/>
</dbReference>
<dbReference type="GO" id="GO:0022900">
    <property type="term" value="P:electron transport chain"/>
    <property type="evidence" value="ECO:0007669"/>
    <property type="project" value="InterPro"/>
</dbReference>
<dbReference type="CDD" id="cd00207">
    <property type="entry name" value="fer2"/>
    <property type="match status" value="1"/>
</dbReference>
<dbReference type="FunFam" id="3.10.20.30:FF:000014">
    <property type="entry name" value="Ferredoxin"/>
    <property type="match status" value="1"/>
</dbReference>
<dbReference type="Gene3D" id="3.10.20.30">
    <property type="match status" value="1"/>
</dbReference>
<dbReference type="InterPro" id="IPR036010">
    <property type="entry name" value="2Fe-2S_ferredoxin-like_sf"/>
</dbReference>
<dbReference type="InterPro" id="IPR001041">
    <property type="entry name" value="2Fe-2S_ferredoxin-type"/>
</dbReference>
<dbReference type="InterPro" id="IPR006058">
    <property type="entry name" value="2Fe2S_fd_BS"/>
</dbReference>
<dbReference type="InterPro" id="IPR012675">
    <property type="entry name" value="Beta-grasp_dom_sf"/>
</dbReference>
<dbReference type="InterPro" id="IPR010241">
    <property type="entry name" value="Fd_pln"/>
</dbReference>
<dbReference type="NCBIfam" id="TIGR02008">
    <property type="entry name" value="fdx_plant"/>
    <property type="match status" value="1"/>
</dbReference>
<dbReference type="PANTHER" id="PTHR43112">
    <property type="entry name" value="FERREDOXIN"/>
    <property type="match status" value="1"/>
</dbReference>
<dbReference type="PANTHER" id="PTHR43112:SF3">
    <property type="entry name" value="FERREDOXIN-2, CHLOROPLASTIC"/>
    <property type="match status" value="1"/>
</dbReference>
<dbReference type="Pfam" id="PF00111">
    <property type="entry name" value="Fer2"/>
    <property type="match status" value="1"/>
</dbReference>
<dbReference type="SUPFAM" id="SSF54292">
    <property type="entry name" value="2Fe-2S ferredoxin-like"/>
    <property type="match status" value="1"/>
</dbReference>
<dbReference type="PROSITE" id="PS00197">
    <property type="entry name" value="2FE2S_FER_1"/>
    <property type="match status" value="1"/>
</dbReference>
<dbReference type="PROSITE" id="PS51085">
    <property type="entry name" value="2FE2S_FER_2"/>
    <property type="match status" value="1"/>
</dbReference>
<sequence length="93" mass="9958">FKVTLDTPDGKKSFECPGDSYILDKAEEEGLELPYSCRAGSCSSCAGKVLTGSIDQSDQAFLDDDQGGDGYCLTCVTYPTSDVTIKTHCESEL</sequence>
<proteinExistence type="evidence at protein level"/>
<accession>P10770</accession>
<feature type="chain" id="PRO_0000189346" description="Ferredoxin">
    <location>
        <begin position="1"/>
        <end position="93"/>
    </location>
</feature>
<feature type="domain" description="2Fe-2S ferredoxin-type" evidence="1">
    <location>
        <begin position="1"/>
        <end position="91"/>
    </location>
</feature>
<feature type="binding site" evidence="1">
    <location>
        <position position="37"/>
    </location>
    <ligand>
        <name>[2Fe-2S] cluster</name>
        <dbReference type="ChEBI" id="CHEBI:190135"/>
    </ligand>
</feature>
<feature type="binding site" evidence="1">
    <location>
        <position position="42"/>
    </location>
    <ligand>
        <name>[2Fe-2S] cluster</name>
        <dbReference type="ChEBI" id="CHEBI:190135"/>
    </ligand>
</feature>
<feature type="binding site" evidence="1">
    <location>
        <position position="45"/>
    </location>
    <ligand>
        <name>[2Fe-2S] cluster</name>
        <dbReference type="ChEBI" id="CHEBI:190135"/>
    </ligand>
</feature>
<feature type="binding site" evidence="1">
    <location>
        <position position="75"/>
    </location>
    <ligand>
        <name>[2Fe-2S] cluster</name>
        <dbReference type="ChEBI" id="CHEBI:190135"/>
    </ligand>
</feature>
<protein>
    <recommendedName>
        <fullName>Ferredoxin</fullName>
    </recommendedName>
</protein>
<name>FER_PERBI</name>
<comment type="function">
    <text>Ferredoxins are iron-sulfur proteins that transfer electrons in a wide variety of metabolic reactions.</text>
</comment>
<comment type="cofactor">
    <cofactor>
        <name>[2Fe-2S] cluster</name>
        <dbReference type="ChEBI" id="CHEBI:190135"/>
    </cofactor>
    <text>Binds 1 [2Fe-2S] cluster.</text>
</comment>
<comment type="subcellular location">
    <subcellularLocation>
        <location>Plastid</location>
        <location>Chloroplast</location>
    </subcellularLocation>
</comment>
<comment type="similarity">
    <text evidence="2">Belongs to the 2Fe2S plant-type ferredoxin family.</text>
</comment>
<reference key="1">
    <citation type="journal article" date="1988" name="J. Biochem.">
        <title>Complete amino acid sequence of ferredoxin from Peridinium bipes (Dinophyceae).</title>
        <authorList>
            <person name="Uchida A."/>
            <person name="Ebata S."/>
            <person name="Wada K."/>
            <person name="Matsubara H."/>
            <person name="Ishida Y."/>
        </authorList>
    </citation>
    <scope>PROTEIN SEQUENCE</scope>
</reference>
<organism>
    <name type="scientific">Peridinium bipes</name>
    <name type="common">Dinoflagellate</name>
    <dbReference type="NCBI Taxonomy" id="2868"/>
    <lineage>
        <taxon>Eukaryota</taxon>
        <taxon>Sar</taxon>
        <taxon>Alveolata</taxon>
        <taxon>Dinophyceae</taxon>
        <taxon>Peridiniales</taxon>
        <taxon>Peridiniaceae</taxon>
        <taxon>Peridinium</taxon>
    </lineage>
</organism>
<keyword id="KW-0001">2Fe-2S</keyword>
<keyword id="KW-0150">Chloroplast</keyword>
<keyword id="KW-0903">Direct protein sequencing</keyword>
<keyword id="KW-0249">Electron transport</keyword>
<keyword id="KW-0408">Iron</keyword>
<keyword id="KW-0411">Iron-sulfur</keyword>
<keyword id="KW-0479">Metal-binding</keyword>
<keyword id="KW-0934">Plastid</keyword>
<keyword id="KW-0813">Transport</keyword>
<evidence type="ECO:0000255" key="1">
    <source>
        <dbReference type="PROSITE-ProRule" id="PRU00465"/>
    </source>
</evidence>
<evidence type="ECO:0000305" key="2"/>